<reference key="1">
    <citation type="journal article" date="1997" name="Nature">
        <title>The complete genome sequence of the Gram-positive bacterium Bacillus subtilis.</title>
        <authorList>
            <person name="Kunst F."/>
            <person name="Ogasawara N."/>
            <person name="Moszer I."/>
            <person name="Albertini A.M."/>
            <person name="Alloni G."/>
            <person name="Azevedo V."/>
            <person name="Bertero M.G."/>
            <person name="Bessieres P."/>
            <person name="Bolotin A."/>
            <person name="Borchert S."/>
            <person name="Borriss R."/>
            <person name="Boursier L."/>
            <person name="Brans A."/>
            <person name="Braun M."/>
            <person name="Brignell S.C."/>
            <person name="Bron S."/>
            <person name="Brouillet S."/>
            <person name="Bruschi C.V."/>
            <person name="Caldwell B."/>
            <person name="Capuano V."/>
            <person name="Carter N.M."/>
            <person name="Choi S.-K."/>
            <person name="Codani J.-J."/>
            <person name="Connerton I.F."/>
            <person name="Cummings N.J."/>
            <person name="Daniel R.A."/>
            <person name="Denizot F."/>
            <person name="Devine K.M."/>
            <person name="Duesterhoeft A."/>
            <person name="Ehrlich S.D."/>
            <person name="Emmerson P.T."/>
            <person name="Entian K.-D."/>
            <person name="Errington J."/>
            <person name="Fabret C."/>
            <person name="Ferrari E."/>
            <person name="Foulger D."/>
            <person name="Fritz C."/>
            <person name="Fujita M."/>
            <person name="Fujita Y."/>
            <person name="Fuma S."/>
            <person name="Galizzi A."/>
            <person name="Galleron N."/>
            <person name="Ghim S.-Y."/>
            <person name="Glaser P."/>
            <person name="Goffeau A."/>
            <person name="Golightly E.J."/>
            <person name="Grandi G."/>
            <person name="Guiseppi G."/>
            <person name="Guy B.J."/>
            <person name="Haga K."/>
            <person name="Haiech J."/>
            <person name="Harwood C.R."/>
            <person name="Henaut A."/>
            <person name="Hilbert H."/>
            <person name="Holsappel S."/>
            <person name="Hosono S."/>
            <person name="Hullo M.-F."/>
            <person name="Itaya M."/>
            <person name="Jones L.-M."/>
            <person name="Joris B."/>
            <person name="Karamata D."/>
            <person name="Kasahara Y."/>
            <person name="Klaerr-Blanchard M."/>
            <person name="Klein C."/>
            <person name="Kobayashi Y."/>
            <person name="Koetter P."/>
            <person name="Koningstein G."/>
            <person name="Krogh S."/>
            <person name="Kumano M."/>
            <person name="Kurita K."/>
            <person name="Lapidus A."/>
            <person name="Lardinois S."/>
            <person name="Lauber J."/>
            <person name="Lazarevic V."/>
            <person name="Lee S.-M."/>
            <person name="Levine A."/>
            <person name="Liu H."/>
            <person name="Masuda S."/>
            <person name="Mauel C."/>
            <person name="Medigue C."/>
            <person name="Medina N."/>
            <person name="Mellado R.P."/>
            <person name="Mizuno M."/>
            <person name="Moestl D."/>
            <person name="Nakai S."/>
            <person name="Noback M."/>
            <person name="Noone D."/>
            <person name="O'Reilly M."/>
            <person name="Ogawa K."/>
            <person name="Ogiwara A."/>
            <person name="Oudega B."/>
            <person name="Park S.-H."/>
            <person name="Parro V."/>
            <person name="Pohl T.M."/>
            <person name="Portetelle D."/>
            <person name="Porwollik S."/>
            <person name="Prescott A.M."/>
            <person name="Presecan E."/>
            <person name="Pujic P."/>
            <person name="Purnelle B."/>
            <person name="Rapoport G."/>
            <person name="Rey M."/>
            <person name="Reynolds S."/>
            <person name="Rieger M."/>
            <person name="Rivolta C."/>
            <person name="Rocha E."/>
            <person name="Roche B."/>
            <person name="Rose M."/>
            <person name="Sadaie Y."/>
            <person name="Sato T."/>
            <person name="Scanlan E."/>
            <person name="Schleich S."/>
            <person name="Schroeter R."/>
            <person name="Scoffone F."/>
            <person name="Sekiguchi J."/>
            <person name="Sekowska A."/>
            <person name="Seror S.J."/>
            <person name="Serror P."/>
            <person name="Shin B.-S."/>
            <person name="Soldo B."/>
            <person name="Sorokin A."/>
            <person name="Tacconi E."/>
            <person name="Takagi T."/>
            <person name="Takahashi H."/>
            <person name="Takemaru K."/>
            <person name="Takeuchi M."/>
            <person name="Tamakoshi A."/>
            <person name="Tanaka T."/>
            <person name="Terpstra P."/>
            <person name="Tognoni A."/>
            <person name="Tosato V."/>
            <person name="Uchiyama S."/>
            <person name="Vandenbol M."/>
            <person name="Vannier F."/>
            <person name="Vassarotti A."/>
            <person name="Viari A."/>
            <person name="Wambutt R."/>
            <person name="Wedler E."/>
            <person name="Wedler H."/>
            <person name="Weitzenegger T."/>
            <person name="Winters P."/>
            <person name="Wipat A."/>
            <person name="Yamamoto H."/>
            <person name="Yamane K."/>
            <person name="Yasumoto K."/>
            <person name="Yata K."/>
            <person name="Yoshida K."/>
            <person name="Yoshikawa H.-F."/>
            <person name="Zumstein E."/>
            <person name="Yoshikawa H."/>
            <person name="Danchin A."/>
        </authorList>
    </citation>
    <scope>NUCLEOTIDE SEQUENCE [LARGE SCALE GENOMIC DNA]</scope>
    <source>
        <strain>168</strain>
    </source>
</reference>
<reference key="2">
    <citation type="journal article" date="2009" name="J. Bacteriol.">
        <title>RemA (YlzA) and RemB (YaaB) regulate extracellular matrix operon expression and biofilm formation in Bacillus subtilis.</title>
        <authorList>
            <person name="Winkelman J.T."/>
            <person name="Blair K.M."/>
            <person name="Kearns D.B."/>
        </authorList>
    </citation>
    <scope>FUNCTION</scope>
    <scope>DISRUPTION PHENOTYPE</scope>
</reference>
<reference key="3">
    <citation type="journal article" date="2013" name="J. Bacteriol.">
        <title>A genomic signature and the identification of new sporulation genes.</title>
        <authorList>
            <person name="Abecasis A.B."/>
            <person name="Serrano M."/>
            <person name="Alves R."/>
            <person name="Quintais L."/>
            <person name="Pereira-Leal J.B."/>
            <person name="Henriques A.O."/>
        </authorList>
    </citation>
    <scope>FUNCTION</scope>
    <scope>DEVELOPMENTAL STAGE</scope>
    <scope>DISRUPTION PHENOTYPE</scope>
</reference>
<reference key="4">
    <citation type="journal article" date="2013" name="Mol. Microbiol.">
        <title>RemA is a DNA-binding protein that activates biofilm matrix gene expression in Bacillus subtilis.</title>
        <authorList>
            <person name="Winkelman J.T."/>
            <person name="Bree A.C."/>
            <person name="Bate A.R."/>
            <person name="Eichenberger P."/>
            <person name="Gourse R.L."/>
            <person name="Kearns D.B."/>
        </authorList>
    </citation>
    <scope>FUNCTION</scope>
    <scope>DNA-BINDING</scope>
</reference>
<accession>Q7WY72</accession>
<sequence length="89" mass="9849">MTIKLINIGFGNIISANRMISIVSPESAPIKRMIQDARDRGMLIDATYGRRTRAVVVMDSDHIILSAVQPETVAHRLSVKEEIMDEGQG</sequence>
<protein>
    <recommendedName>
        <fullName evidence="6">Extracellular matrix regulatory protein A</fullName>
    </recommendedName>
    <alternativeName>
        <fullName evidence="5">Regulator of extracellular matrix A</fullName>
    </alternativeName>
</protein>
<proteinExistence type="evidence at protein level"/>
<organism>
    <name type="scientific">Bacillus subtilis (strain 168)</name>
    <dbReference type="NCBI Taxonomy" id="224308"/>
    <lineage>
        <taxon>Bacteria</taxon>
        <taxon>Bacillati</taxon>
        <taxon>Bacillota</taxon>
        <taxon>Bacilli</taxon>
        <taxon>Bacillales</taxon>
        <taxon>Bacillaceae</taxon>
        <taxon>Bacillus</taxon>
    </lineage>
</organism>
<feature type="chain" id="PRO_0000050223" description="Extracellular matrix regulatory protein A">
    <location>
        <begin position="1"/>
        <end position="89"/>
    </location>
</feature>
<gene>
    <name evidence="5" type="primary">remA</name>
    <name type="synonym">ylzA</name>
    <name type="ordered locus">BSU15670</name>
</gene>
<keyword id="KW-0238">DNA-binding</keyword>
<keyword id="KW-1185">Reference proteome</keyword>
<keyword id="KW-0804">Transcription</keyword>
<keyword id="KW-0805">Transcription regulation</keyword>
<name>REMA_BACSU</name>
<dbReference type="EMBL" id="AL009126">
    <property type="protein sequence ID" value="CAE01452.1"/>
    <property type="molecule type" value="Genomic_DNA"/>
</dbReference>
<dbReference type="RefSeq" id="NP_570902.1">
    <property type="nucleotide sequence ID" value="NC_000964.3"/>
</dbReference>
<dbReference type="RefSeq" id="WP_003154355.1">
    <property type="nucleotide sequence ID" value="NZ_OZ025638.1"/>
</dbReference>
<dbReference type="SMR" id="Q7WY72"/>
<dbReference type="FunCoup" id="Q7WY72">
    <property type="interactions" value="5"/>
</dbReference>
<dbReference type="STRING" id="224308.BSU15670"/>
<dbReference type="PaxDb" id="224308-BSU15670"/>
<dbReference type="DNASU" id="937956"/>
<dbReference type="EnsemblBacteria" id="CAE01452">
    <property type="protein sequence ID" value="CAE01452"/>
    <property type="gene ID" value="BSU_15670"/>
</dbReference>
<dbReference type="GeneID" id="93080683"/>
<dbReference type="GeneID" id="937956"/>
<dbReference type="KEGG" id="bsu:BSU15670"/>
<dbReference type="PATRIC" id="fig|224308.179.peg.1707"/>
<dbReference type="eggNOG" id="COG2052">
    <property type="taxonomic scope" value="Bacteria"/>
</dbReference>
<dbReference type="InParanoid" id="Q7WY72"/>
<dbReference type="OrthoDB" id="5432174at2"/>
<dbReference type="PhylomeDB" id="Q7WY72"/>
<dbReference type="BioCyc" id="BSUB:BSU15670-MONOMER"/>
<dbReference type="PRO" id="PR:Q7WY72"/>
<dbReference type="Proteomes" id="UP000001570">
    <property type="component" value="Chromosome"/>
</dbReference>
<dbReference type="GO" id="GO:0003677">
    <property type="term" value="F:DNA binding"/>
    <property type="evidence" value="ECO:0007669"/>
    <property type="project" value="UniProtKB-KW"/>
</dbReference>
<dbReference type="HAMAP" id="MF_01503">
    <property type="entry name" value="RemA"/>
    <property type="match status" value="1"/>
</dbReference>
<dbReference type="InterPro" id="IPR007169">
    <property type="entry name" value="RemA-like"/>
</dbReference>
<dbReference type="NCBIfam" id="NF046064">
    <property type="entry name" value="MtxBflmRegRemA"/>
    <property type="match status" value="1"/>
</dbReference>
<dbReference type="NCBIfam" id="NF003315">
    <property type="entry name" value="PRK04323.1"/>
    <property type="match status" value="1"/>
</dbReference>
<dbReference type="PANTHER" id="PTHR38449:SF1">
    <property type="entry name" value="REGULATORY PROTEIN SSL2874-RELATED"/>
    <property type="match status" value="1"/>
</dbReference>
<dbReference type="PANTHER" id="PTHR38449">
    <property type="entry name" value="REGULATORY PROTEIN TM_1690-RELATED"/>
    <property type="match status" value="1"/>
</dbReference>
<dbReference type="Pfam" id="PF04025">
    <property type="entry name" value="RemA-like"/>
    <property type="match status" value="1"/>
</dbReference>
<comment type="function">
    <text evidence="2 3 4">Regulates the biosynthesis of the extracellular matrix and the biofilm formation (PubMed:19363116, PubMed:23646920). Activates the transcription of the matrix biosynthesis operons eps and tapA-sipW-tasA. Also activates expression of the opuA operon, involved in osmoprotection. Acts by binding specifically to the promoter region of the target genes (PubMed:23646920). Acts in parallel to the pathway that governs SinR derepression (PubMed:19363116, PubMed:23646920). Required for endosporulation (PubMed:23396918).</text>
</comment>
<comment type="developmental stage">
    <text evidence="3">Expressed in the forespore during sporulation.</text>
</comment>
<comment type="disruption phenotype">
    <text evidence="2 3">Mutation impairs pellicle formation, complex colony architecture and motility inhibition in a sinR mutant background (PubMed:19363116). Mutant is defective in biofilm formation and also shows a delay in spore formation during biofilm formation (PubMed:23396918).</text>
</comment>
<comment type="similarity">
    <text evidence="1 6">Belongs to the RemA family.</text>
</comment>
<evidence type="ECO:0000255" key="1">
    <source>
        <dbReference type="HAMAP-Rule" id="MF_01503"/>
    </source>
</evidence>
<evidence type="ECO:0000269" key="2">
    <source>
    </source>
</evidence>
<evidence type="ECO:0000269" key="3">
    <source>
    </source>
</evidence>
<evidence type="ECO:0000269" key="4">
    <source>
    </source>
</evidence>
<evidence type="ECO:0000303" key="5">
    <source>
    </source>
</evidence>
<evidence type="ECO:0000305" key="6"/>